<reference key="1">
    <citation type="journal article" date="2002" name="Nature">
        <title>Genome sequence of the plant pathogen Ralstonia solanacearum.</title>
        <authorList>
            <person name="Salanoubat M."/>
            <person name="Genin S."/>
            <person name="Artiguenave F."/>
            <person name="Gouzy J."/>
            <person name="Mangenot S."/>
            <person name="Arlat M."/>
            <person name="Billault A."/>
            <person name="Brottier P."/>
            <person name="Camus J.-C."/>
            <person name="Cattolico L."/>
            <person name="Chandler M."/>
            <person name="Choisne N."/>
            <person name="Claudel-Renard C."/>
            <person name="Cunnac S."/>
            <person name="Demange N."/>
            <person name="Gaspin C."/>
            <person name="Lavie M."/>
            <person name="Moisan A."/>
            <person name="Robert C."/>
            <person name="Saurin W."/>
            <person name="Schiex T."/>
            <person name="Siguier P."/>
            <person name="Thebault P."/>
            <person name="Whalen M."/>
            <person name="Wincker P."/>
            <person name="Levy M."/>
            <person name="Weissenbach J."/>
            <person name="Boucher C.A."/>
        </authorList>
    </citation>
    <scope>NUCLEOTIDE SEQUENCE [LARGE SCALE GENOMIC DNA]</scope>
    <source>
        <strain>ATCC BAA-1114 / GMI1000</strain>
    </source>
</reference>
<accession>Q8XUZ8</accession>
<keyword id="KW-0240">DNA-directed RNA polymerase</keyword>
<keyword id="KW-0548">Nucleotidyltransferase</keyword>
<keyword id="KW-1185">Reference proteome</keyword>
<keyword id="KW-0804">Transcription</keyword>
<keyword id="KW-0808">Transferase</keyword>
<comment type="function">
    <text evidence="1">DNA-dependent RNA polymerase catalyzes the transcription of DNA into RNA using the four ribonucleoside triphosphates as substrates.</text>
</comment>
<comment type="catalytic activity">
    <reaction evidence="1">
        <text>RNA(n) + a ribonucleoside 5'-triphosphate = RNA(n+1) + diphosphate</text>
        <dbReference type="Rhea" id="RHEA:21248"/>
        <dbReference type="Rhea" id="RHEA-COMP:14527"/>
        <dbReference type="Rhea" id="RHEA-COMP:17342"/>
        <dbReference type="ChEBI" id="CHEBI:33019"/>
        <dbReference type="ChEBI" id="CHEBI:61557"/>
        <dbReference type="ChEBI" id="CHEBI:140395"/>
        <dbReference type="EC" id="2.7.7.6"/>
    </reaction>
</comment>
<comment type="subunit">
    <text evidence="1">The RNAP catalytic core consists of 2 alpha, 1 beta, 1 beta' and 1 omega subunit. When a sigma factor is associated with the core the holoenzyme is formed, which can initiate transcription.</text>
</comment>
<comment type="similarity">
    <text evidence="1">Belongs to the RNA polymerase beta chain family.</text>
</comment>
<name>RPOB_RALN1</name>
<protein>
    <recommendedName>
        <fullName evidence="1">DNA-directed RNA polymerase subunit beta</fullName>
        <shortName evidence="1">RNAP subunit beta</shortName>
        <ecNumber evidence="1">2.7.7.6</ecNumber>
    </recommendedName>
    <alternativeName>
        <fullName evidence="1">RNA polymerase subunit beta</fullName>
    </alternativeName>
    <alternativeName>
        <fullName evidence="1">Transcriptase subunit beta</fullName>
    </alternativeName>
</protein>
<feature type="chain" id="PRO_0000047944" description="DNA-directed RNA polymerase subunit beta">
    <location>
        <begin position="1"/>
        <end position="1368"/>
    </location>
</feature>
<dbReference type="EC" id="2.7.7.6" evidence="1"/>
<dbReference type="EMBL" id="AL646052">
    <property type="protein sequence ID" value="CAD16743.1"/>
    <property type="molecule type" value="Genomic_DNA"/>
</dbReference>
<dbReference type="RefSeq" id="WP_011002929.1">
    <property type="nucleotide sequence ID" value="NC_003295.1"/>
</dbReference>
<dbReference type="SMR" id="Q8XUZ8"/>
<dbReference type="STRING" id="267608.RSc3034"/>
<dbReference type="EnsemblBacteria" id="CAD16743">
    <property type="protein sequence ID" value="CAD16743"/>
    <property type="gene ID" value="RSc3034"/>
</dbReference>
<dbReference type="KEGG" id="rso:RSc3034"/>
<dbReference type="eggNOG" id="COG0085">
    <property type="taxonomic scope" value="Bacteria"/>
</dbReference>
<dbReference type="HOGENOM" id="CLU_000524_4_3_4"/>
<dbReference type="Proteomes" id="UP000001436">
    <property type="component" value="Chromosome"/>
</dbReference>
<dbReference type="GO" id="GO:0000428">
    <property type="term" value="C:DNA-directed RNA polymerase complex"/>
    <property type="evidence" value="ECO:0007669"/>
    <property type="project" value="UniProtKB-KW"/>
</dbReference>
<dbReference type="GO" id="GO:0003677">
    <property type="term" value="F:DNA binding"/>
    <property type="evidence" value="ECO:0007669"/>
    <property type="project" value="UniProtKB-UniRule"/>
</dbReference>
<dbReference type="GO" id="GO:0003899">
    <property type="term" value="F:DNA-directed RNA polymerase activity"/>
    <property type="evidence" value="ECO:0007669"/>
    <property type="project" value="UniProtKB-UniRule"/>
</dbReference>
<dbReference type="GO" id="GO:0032549">
    <property type="term" value="F:ribonucleoside binding"/>
    <property type="evidence" value="ECO:0007669"/>
    <property type="project" value="InterPro"/>
</dbReference>
<dbReference type="GO" id="GO:0006351">
    <property type="term" value="P:DNA-templated transcription"/>
    <property type="evidence" value="ECO:0007669"/>
    <property type="project" value="UniProtKB-UniRule"/>
</dbReference>
<dbReference type="CDD" id="cd00653">
    <property type="entry name" value="RNA_pol_B_RPB2"/>
    <property type="match status" value="1"/>
</dbReference>
<dbReference type="FunFam" id="2.40.50.100:FF:000006">
    <property type="entry name" value="DNA-directed RNA polymerase subunit beta"/>
    <property type="match status" value="1"/>
</dbReference>
<dbReference type="FunFam" id="2.40.50.150:FF:000001">
    <property type="entry name" value="DNA-directed RNA polymerase subunit beta"/>
    <property type="match status" value="1"/>
</dbReference>
<dbReference type="FunFam" id="3.90.1800.10:FF:000001">
    <property type="entry name" value="DNA-directed RNA polymerase subunit beta"/>
    <property type="match status" value="1"/>
</dbReference>
<dbReference type="Gene3D" id="2.40.50.100">
    <property type="match status" value="1"/>
</dbReference>
<dbReference type="Gene3D" id="2.40.50.150">
    <property type="match status" value="1"/>
</dbReference>
<dbReference type="Gene3D" id="3.90.1100.10">
    <property type="match status" value="2"/>
</dbReference>
<dbReference type="Gene3D" id="6.10.140.1670">
    <property type="match status" value="1"/>
</dbReference>
<dbReference type="Gene3D" id="2.30.150.10">
    <property type="entry name" value="DNA-directed RNA polymerase, beta subunit, external 1 domain"/>
    <property type="match status" value="1"/>
</dbReference>
<dbReference type="Gene3D" id="2.40.270.10">
    <property type="entry name" value="DNA-directed RNA polymerase, subunit 2, domain 6"/>
    <property type="match status" value="1"/>
</dbReference>
<dbReference type="Gene3D" id="3.90.1800.10">
    <property type="entry name" value="RNA polymerase alpha subunit dimerisation domain"/>
    <property type="match status" value="1"/>
</dbReference>
<dbReference type="Gene3D" id="3.90.1110.10">
    <property type="entry name" value="RNA polymerase Rpb2, domain 2"/>
    <property type="match status" value="1"/>
</dbReference>
<dbReference type="HAMAP" id="MF_01321">
    <property type="entry name" value="RNApol_bact_RpoB"/>
    <property type="match status" value="1"/>
</dbReference>
<dbReference type="InterPro" id="IPR042107">
    <property type="entry name" value="DNA-dir_RNA_pol_bsu_ext_1_sf"/>
</dbReference>
<dbReference type="InterPro" id="IPR019462">
    <property type="entry name" value="DNA-dir_RNA_pol_bsu_external_1"/>
</dbReference>
<dbReference type="InterPro" id="IPR015712">
    <property type="entry name" value="DNA-dir_RNA_pol_su2"/>
</dbReference>
<dbReference type="InterPro" id="IPR007120">
    <property type="entry name" value="DNA-dir_RNAP_su2_dom"/>
</dbReference>
<dbReference type="InterPro" id="IPR037033">
    <property type="entry name" value="DNA-dir_RNAP_su2_hyb_sf"/>
</dbReference>
<dbReference type="InterPro" id="IPR010243">
    <property type="entry name" value="RNA_pol_bsu_bac"/>
</dbReference>
<dbReference type="InterPro" id="IPR007121">
    <property type="entry name" value="RNA_pol_bsu_CS"/>
</dbReference>
<dbReference type="InterPro" id="IPR007644">
    <property type="entry name" value="RNA_pol_bsu_protrusion"/>
</dbReference>
<dbReference type="InterPro" id="IPR007642">
    <property type="entry name" value="RNA_pol_Rpb2_2"/>
</dbReference>
<dbReference type="InterPro" id="IPR037034">
    <property type="entry name" value="RNA_pol_Rpb2_2_sf"/>
</dbReference>
<dbReference type="InterPro" id="IPR007645">
    <property type="entry name" value="RNA_pol_Rpb2_3"/>
</dbReference>
<dbReference type="InterPro" id="IPR007641">
    <property type="entry name" value="RNA_pol_Rpb2_7"/>
</dbReference>
<dbReference type="InterPro" id="IPR014724">
    <property type="entry name" value="RNA_pol_RPB2_OB-fold"/>
</dbReference>
<dbReference type="NCBIfam" id="NF001616">
    <property type="entry name" value="PRK00405.1"/>
    <property type="match status" value="1"/>
</dbReference>
<dbReference type="NCBIfam" id="TIGR02013">
    <property type="entry name" value="rpoB"/>
    <property type="match status" value="1"/>
</dbReference>
<dbReference type="PANTHER" id="PTHR20856">
    <property type="entry name" value="DNA-DIRECTED RNA POLYMERASE I SUBUNIT 2"/>
    <property type="match status" value="1"/>
</dbReference>
<dbReference type="Pfam" id="PF04563">
    <property type="entry name" value="RNA_pol_Rpb2_1"/>
    <property type="match status" value="1"/>
</dbReference>
<dbReference type="Pfam" id="PF04561">
    <property type="entry name" value="RNA_pol_Rpb2_2"/>
    <property type="match status" value="2"/>
</dbReference>
<dbReference type="Pfam" id="PF04565">
    <property type="entry name" value="RNA_pol_Rpb2_3"/>
    <property type="match status" value="1"/>
</dbReference>
<dbReference type="Pfam" id="PF10385">
    <property type="entry name" value="RNA_pol_Rpb2_45"/>
    <property type="match status" value="1"/>
</dbReference>
<dbReference type="Pfam" id="PF00562">
    <property type="entry name" value="RNA_pol_Rpb2_6"/>
    <property type="match status" value="1"/>
</dbReference>
<dbReference type="Pfam" id="PF04560">
    <property type="entry name" value="RNA_pol_Rpb2_7"/>
    <property type="match status" value="1"/>
</dbReference>
<dbReference type="SUPFAM" id="SSF64484">
    <property type="entry name" value="beta and beta-prime subunits of DNA dependent RNA-polymerase"/>
    <property type="match status" value="1"/>
</dbReference>
<dbReference type="PROSITE" id="PS01166">
    <property type="entry name" value="RNA_POL_BETA"/>
    <property type="match status" value="1"/>
</dbReference>
<evidence type="ECO:0000255" key="1">
    <source>
        <dbReference type="HAMAP-Rule" id="MF_01321"/>
    </source>
</evidence>
<gene>
    <name evidence="1" type="primary">rpoB</name>
    <name type="ordered locus">RSc3034</name>
    <name type="ORF">RS04723</name>
</gene>
<organism>
    <name type="scientific">Ralstonia nicotianae (strain ATCC BAA-1114 / GMI1000)</name>
    <name type="common">Ralstonia solanacearum</name>
    <dbReference type="NCBI Taxonomy" id="267608"/>
    <lineage>
        <taxon>Bacteria</taxon>
        <taxon>Pseudomonadati</taxon>
        <taxon>Pseudomonadota</taxon>
        <taxon>Betaproteobacteria</taxon>
        <taxon>Burkholderiales</taxon>
        <taxon>Burkholderiaceae</taxon>
        <taxon>Ralstonia</taxon>
        <taxon>Ralstonia solanacearum species complex</taxon>
    </lineage>
</organism>
<sequence>MAYSFTEKKRIRKSFAKRATVHQVPFLLATQIQSYAQFLQEHASVAQRKSEGLQAAFNAIFPIVSHNGLARMEFVSYHLSNPPFDVKECQQRGLTFHSALRAKVRLIINDRENPTKVKEIKEQEVYMGEIPLMTSTGSFVINGTERVIVSQLHRSPGVFFEHDKGKTHSSGKLLFSARIIPYRGSWLDFEFDPKDILYFRVDRRRKMPVTILLKSIGLTPEQILAHFFVFDNFTLKSDGALMEFVPERLRGEVARFDISDKNGKVVVEKDKRINAKHIRDLDAAGTKLISVPEDYLLGRVLAKNIVDPDTGEVLANANDELTEGVLEKLRDAGVKEIQTLYTNDLDQGPYMSQTLRTDDTVDQTAARIAIYRMMRPGEPPTEDAVEALFQRLFYSEDSYDLSRVGRMKVNSRLNRSEGTGPMVLTDDDILDTIKLLVNLRNGKGEVDDIDHLGNRRVRCVGELAENQFRAGLSRVERAVKERLGQAETENLMPHDLINSKPISSAIREFFGSSQLSQFMDQTNPLSEVTHKRRISALGPGGLTRERAGFEVRDVHPTHYGRVCPIETPEGPNIGLINSLALYAQLNDYGFLETPYRKVENSKLTDQVDYLSAIEEGKYVVAQANATVDKDGNLVDELVSAREGSERETRMVTPDRVQYIDVAPSQIVSAAASLVPFLEHDDANRALMGANMQRQAVPCLRADKPLVGTGVERTVAVDSGTAVQATRGGLVDYVDANRVVIRVNDDEAVAGEVGVDIYNLIKYTRSNQNTNINQRPMVKVGDIVARGDVIADGASTDLGELALGQNMLVAFMPWNGYNFEDSILISERVVAEDRYTSIHIEELSVVARDTKLGPEEITRDISNLAEAQLARLDESGITYIGAEVEAGDVMVGKVTPKGETQLTPEEKLLRAIFGEKASDVKDTSLRVPSGMSGTVIDVQVFTREGVTRDKRAQSIIDEELKRYRLDLNDQLRIVEGDAFQRLERLLVGKVVNGGPKKLAKGTALTKEYLADLDKWHWFDIRPSDDDVATQLEAVKEAIEQKRHDFDLAFEEKRKKLTQGDELPPGVIKMVKVYLAVKRRLQPGDKMAGRHGNKGVVSKITPIEDMPYMADGTPADIVLNPLGVPSRMNVGQILETHLGWAARGLGERIGNMLKAQAKAAEMRKLLGQIYNESGKVEDLDSLSDAEVLELAENLKKGVPFATPVFDGAHEDEIRRMLDLAYPEDIAKEKGLTASKQQVTLFDGRTGEAFERPVTLGVMHMLKLHHLVDDKMHARSTGPYSLVTQQPLGGKAQFGGQRFGEMEVWALEAYGASYVLQEMLTVKSDDVNGRTKVYENIVKGEHSIDAGMPESFNVLVKEIRSLGIDIDLERN</sequence>
<proteinExistence type="inferred from homology"/>